<gene>
    <name evidence="1" type="primary">purC</name>
    <name type="ordered locus">SAOUHSC_01010</name>
</gene>
<keyword id="KW-0067">ATP-binding</keyword>
<keyword id="KW-0436">Ligase</keyword>
<keyword id="KW-0547">Nucleotide-binding</keyword>
<keyword id="KW-0658">Purine biosynthesis</keyword>
<keyword id="KW-1185">Reference proteome</keyword>
<comment type="catalytic activity">
    <reaction evidence="1">
        <text>5-amino-1-(5-phospho-D-ribosyl)imidazole-4-carboxylate + L-aspartate + ATP = (2S)-2-[5-amino-1-(5-phospho-beta-D-ribosyl)imidazole-4-carboxamido]succinate + ADP + phosphate + 2 H(+)</text>
        <dbReference type="Rhea" id="RHEA:22628"/>
        <dbReference type="ChEBI" id="CHEBI:15378"/>
        <dbReference type="ChEBI" id="CHEBI:29991"/>
        <dbReference type="ChEBI" id="CHEBI:30616"/>
        <dbReference type="ChEBI" id="CHEBI:43474"/>
        <dbReference type="ChEBI" id="CHEBI:58443"/>
        <dbReference type="ChEBI" id="CHEBI:77657"/>
        <dbReference type="ChEBI" id="CHEBI:456216"/>
        <dbReference type="EC" id="6.3.2.6"/>
    </reaction>
</comment>
<comment type="pathway">
    <text evidence="1">Purine metabolism; IMP biosynthesis via de novo pathway; 5-amino-1-(5-phospho-D-ribosyl)imidazole-4-carboxamide from 5-amino-1-(5-phospho-D-ribosyl)imidazole-4-carboxylate: step 1/2.</text>
</comment>
<comment type="similarity">
    <text evidence="1">Belongs to the SAICAR synthetase family.</text>
</comment>
<sequence length="234" mass="26693">MTLLYEGKAKRIFSTNQENELRVEYKDEVTAGNGAKKDTMAGKGRLNNQITSIIFKYLQENGIESHFIKQLSETEQLVKPVKIIPLEVVVRNIASGSITKRLGFENGEVFREPLVEFFYKNDALNDPLITDDHVKLLNIASDEDIEILKSKALKINNVLKQLMDAMNLKLVDFKIEFGKTETGQILLADEISPDTCRIWDKATNANFDKDVYRNNTGSLIETYQIFLNKLEDLK</sequence>
<feature type="chain" id="PRO_1000018788" description="Phosphoribosylaminoimidazole-succinocarboxamide synthase">
    <location>
        <begin position="1"/>
        <end position="234"/>
    </location>
</feature>
<reference key="1">
    <citation type="book" date="2006" name="Gram positive pathogens, 2nd edition">
        <title>The Staphylococcus aureus NCTC 8325 genome.</title>
        <editorList>
            <person name="Fischetti V."/>
            <person name="Novick R."/>
            <person name="Ferretti J."/>
            <person name="Portnoy D."/>
            <person name="Rood J."/>
        </editorList>
        <authorList>
            <person name="Gillaspy A.F."/>
            <person name="Worrell V."/>
            <person name="Orvis J."/>
            <person name="Roe B.A."/>
            <person name="Dyer D.W."/>
            <person name="Iandolo J.J."/>
        </authorList>
    </citation>
    <scope>NUCLEOTIDE SEQUENCE [LARGE SCALE GENOMIC DNA]</scope>
    <source>
        <strain>NCTC 8325 / PS 47</strain>
    </source>
</reference>
<proteinExistence type="inferred from homology"/>
<dbReference type="EC" id="6.3.2.6" evidence="1"/>
<dbReference type="EMBL" id="CP000253">
    <property type="protein sequence ID" value="ABD30132.1"/>
    <property type="molecule type" value="Genomic_DNA"/>
</dbReference>
<dbReference type="RefSeq" id="WP_000174053.1">
    <property type="nucleotide sequence ID" value="NZ_LS483365.1"/>
</dbReference>
<dbReference type="RefSeq" id="YP_499560.1">
    <property type="nucleotide sequence ID" value="NC_007795.1"/>
</dbReference>
<dbReference type="SMR" id="Q2FZJ3"/>
<dbReference type="STRING" id="93061.SAOUHSC_01010"/>
<dbReference type="PaxDb" id="1280-SAXN108_1063"/>
<dbReference type="GeneID" id="3920271"/>
<dbReference type="KEGG" id="sao:SAOUHSC_01010"/>
<dbReference type="PATRIC" id="fig|93061.5.peg.925"/>
<dbReference type="eggNOG" id="COG0152">
    <property type="taxonomic scope" value="Bacteria"/>
</dbReference>
<dbReference type="HOGENOM" id="CLU_061495_2_0_9"/>
<dbReference type="OrthoDB" id="9801549at2"/>
<dbReference type="UniPathway" id="UPA00074">
    <property type="reaction ID" value="UER00131"/>
</dbReference>
<dbReference type="PRO" id="PR:Q2FZJ3"/>
<dbReference type="Proteomes" id="UP000008816">
    <property type="component" value="Chromosome"/>
</dbReference>
<dbReference type="GO" id="GO:0005524">
    <property type="term" value="F:ATP binding"/>
    <property type="evidence" value="ECO:0007669"/>
    <property type="project" value="UniProtKB-KW"/>
</dbReference>
<dbReference type="GO" id="GO:0004639">
    <property type="term" value="F:phosphoribosylaminoimidazolesuccinocarboxamide synthase activity"/>
    <property type="evidence" value="ECO:0007669"/>
    <property type="project" value="UniProtKB-UniRule"/>
</dbReference>
<dbReference type="GO" id="GO:0006189">
    <property type="term" value="P:'de novo' IMP biosynthetic process"/>
    <property type="evidence" value="ECO:0007669"/>
    <property type="project" value="UniProtKB-UniRule"/>
</dbReference>
<dbReference type="GO" id="GO:0009236">
    <property type="term" value="P:cobalamin biosynthetic process"/>
    <property type="evidence" value="ECO:0007669"/>
    <property type="project" value="InterPro"/>
</dbReference>
<dbReference type="CDD" id="cd01415">
    <property type="entry name" value="SAICAR_synt_PurC"/>
    <property type="match status" value="1"/>
</dbReference>
<dbReference type="FunFam" id="3.30.200.20:FF:000189">
    <property type="entry name" value="Phosphoribosylaminoimidazole-succinocarboxamide synthase"/>
    <property type="match status" value="1"/>
</dbReference>
<dbReference type="FunFam" id="3.30.470.20:FF:000006">
    <property type="entry name" value="Phosphoribosylaminoimidazole-succinocarboxamide synthase"/>
    <property type="match status" value="1"/>
</dbReference>
<dbReference type="Gene3D" id="3.30.470.20">
    <property type="entry name" value="ATP-grasp fold, B domain"/>
    <property type="match status" value="1"/>
</dbReference>
<dbReference type="Gene3D" id="3.30.200.20">
    <property type="entry name" value="Phosphorylase Kinase, domain 1"/>
    <property type="match status" value="1"/>
</dbReference>
<dbReference type="HAMAP" id="MF_00137">
    <property type="entry name" value="SAICAR_synth"/>
    <property type="match status" value="1"/>
</dbReference>
<dbReference type="InterPro" id="IPR028923">
    <property type="entry name" value="SAICAR_synt/ADE2_N"/>
</dbReference>
<dbReference type="InterPro" id="IPR033934">
    <property type="entry name" value="SAICAR_synt_PurC"/>
</dbReference>
<dbReference type="InterPro" id="IPR001636">
    <property type="entry name" value="SAICAR_synth"/>
</dbReference>
<dbReference type="InterPro" id="IPR050089">
    <property type="entry name" value="SAICAR_synthetase"/>
</dbReference>
<dbReference type="InterPro" id="IPR018236">
    <property type="entry name" value="SAICAR_synthetase_CS"/>
</dbReference>
<dbReference type="NCBIfam" id="TIGR00081">
    <property type="entry name" value="purC"/>
    <property type="match status" value="1"/>
</dbReference>
<dbReference type="PANTHER" id="PTHR43599">
    <property type="entry name" value="MULTIFUNCTIONAL PROTEIN ADE2"/>
    <property type="match status" value="1"/>
</dbReference>
<dbReference type="PANTHER" id="PTHR43599:SF3">
    <property type="entry name" value="SI:DKEY-6E2.2"/>
    <property type="match status" value="1"/>
</dbReference>
<dbReference type="Pfam" id="PF01259">
    <property type="entry name" value="SAICAR_synt"/>
    <property type="match status" value="1"/>
</dbReference>
<dbReference type="SUPFAM" id="SSF56104">
    <property type="entry name" value="SAICAR synthase-like"/>
    <property type="match status" value="1"/>
</dbReference>
<dbReference type="PROSITE" id="PS01057">
    <property type="entry name" value="SAICAR_SYNTHETASE_1"/>
    <property type="match status" value="1"/>
</dbReference>
<dbReference type="PROSITE" id="PS01058">
    <property type="entry name" value="SAICAR_SYNTHETASE_2"/>
    <property type="match status" value="1"/>
</dbReference>
<evidence type="ECO:0000255" key="1">
    <source>
        <dbReference type="HAMAP-Rule" id="MF_00137"/>
    </source>
</evidence>
<organism>
    <name type="scientific">Staphylococcus aureus (strain NCTC 8325 / PS 47)</name>
    <dbReference type="NCBI Taxonomy" id="93061"/>
    <lineage>
        <taxon>Bacteria</taxon>
        <taxon>Bacillati</taxon>
        <taxon>Bacillota</taxon>
        <taxon>Bacilli</taxon>
        <taxon>Bacillales</taxon>
        <taxon>Staphylococcaceae</taxon>
        <taxon>Staphylococcus</taxon>
    </lineage>
</organism>
<accession>Q2FZJ3</accession>
<protein>
    <recommendedName>
        <fullName evidence="1">Phosphoribosylaminoimidazole-succinocarboxamide synthase</fullName>
        <ecNumber evidence="1">6.3.2.6</ecNumber>
    </recommendedName>
    <alternativeName>
        <fullName evidence="1">SAICAR synthetase</fullName>
    </alternativeName>
</protein>
<name>PUR7_STAA8</name>